<sequence length="210" mass="23607">MGQKVNPIGFRLGVIKSWDSKWYAEADYAKLLHEDLKIRAFLKKRLYSSGISKIEIERAANKTKINIYTARPGLIIGKKGSEVETIKKELSNLTSKEIFINIIEVRKPELDAQLVAENVALQLERRIAFRRAMKKSVTSALKFGAKGIRITCSGRLGGAEMSRTEWYREGRVPLHTLRADIDYGCAEAKTTYGLIGIKVLIFKGEVLPGH</sequence>
<comment type="function">
    <text evidence="1">Binds the lower part of the 30S subunit head. Binds mRNA in the 70S ribosome, positioning it for translation.</text>
</comment>
<comment type="subunit">
    <text evidence="1">Part of the 30S ribosomal subunit. Forms a tight complex with proteins S10 and S14.</text>
</comment>
<comment type="similarity">
    <text evidence="1">Belongs to the universal ribosomal protein uS3 family.</text>
</comment>
<accession>A1ALU7</accession>
<organism>
    <name type="scientific">Pelobacter propionicus (strain DSM 2379 / NBRC 103807 / OttBd1)</name>
    <dbReference type="NCBI Taxonomy" id="338966"/>
    <lineage>
        <taxon>Bacteria</taxon>
        <taxon>Pseudomonadati</taxon>
        <taxon>Thermodesulfobacteriota</taxon>
        <taxon>Desulfuromonadia</taxon>
        <taxon>Desulfuromonadales</taxon>
        <taxon>Desulfuromonadaceae</taxon>
        <taxon>Pelobacter</taxon>
    </lineage>
</organism>
<gene>
    <name evidence="1" type="primary">rpsC</name>
    <name type="ordered locus">Ppro_0686</name>
</gene>
<feature type="chain" id="PRO_0000293847" description="Small ribosomal subunit protein uS3">
    <location>
        <begin position="1"/>
        <end position="210"/>
    </location>
</feature>
<feature type="domain" description="KH type-2" evidence="1">
    <location>
        <begin position="38"/>
        <end position="106"/>
    </location>
</feature>
<dbReference type="EMBL" id="CP000482">
    <property type="protein sequence ID" value="ABK98317.1"/>
    <property type="molecule type" value="Genomic_DNA"/>
</dbReference>
<dbReference type="RefSeq" id="WP_011734629.1">
    <property type="nucleotide sequence ID" value="NC_008609.1"/>
</dbReference>
<dbReference type="SMR" id="A1ALU7"/>
<dbReference type="STRING" id="338966.Ppro_0686"/>
<dbReference type="KEGG" id="ppd:Ppro_0686"/>
<dbReference type="eggNOG" id="COG0092">
    <property type="taxonomic scope" value="Bacteria"/>
</dbReference>
<dbReference type="HOGENOM" id="CLU_058591_0_2_7"/>
<dbReference type="OrthoDB" id="9806396at2"/>
<dbReference type="Proteomes" id="UP000006732">
    <property type="component" value="Chromosome"/>
</dbReference>
<dbReference type="GO" id="GO:0022627">
    <property type="term" value="C:cytosolic small ribosomal subunit"/>
    <property type="evidence" value="ECO:0007669"/>
    <property type="project" value="TreeGrafter"/>
</dbReference>
<dbReference type="GO" id="GO:0003729">
    <property type="term" value="F:mRNA binding"/>
    <property type="evidence" value="ECO:0007669"/>
    <property type="project" value="UniProtKB-UniRule"/>
</dbReference>
<dbReference type="GO" id="GO:0019843">
    <property type="term" value="F:rRNA binding"/>
    <property type="evidence" value="ECO:0007669"/>
    <property type="project" value="UniProtKB-UniRule"/>
</dbReference>
<dbReference type="GO" id="GO:0003735">
    <property type="term" value="F:structural constituent of ribosome"/>
    <property type="evidence" value="ECO:0007669"/>
    <property type="project" value="InterPro"/>
</dbReference>
<dbReference type="GO" id="GO:0006412">
    <property type="term" value="P:translation"/>
    <property type="evidence" value="ECO:0007669"/>
    <property type="project" value="UniProtKB-UniRule"/>
</dbReference>
<dbReference type="CDD" id="cd02412">
    <property type="entry name" value="KH-II_30S_S3"/>
    <property type="match status" value="1"/>
</dbReference>
<dbReference type="FunFam" id="3.30.1140.32:FF:000009">
    <property type="entry name" value="30S ribosomal protein S3"/>
    <property type="match status" value="1"/>
</dbReference>
<dbReference type="FunFam" id="3.30.300.20:FF:000001">
    <property type="entry name" value="30S ribosomal protein S3"/>
    <property type="match status" value="1"/>
</dbReference>
<dbReference type="Gene3D" id="3.30.300.20">
    <property type="match status" value="1"/>
</dbReference>
<dbReference type="Gene3D" id="3.30.1140.32">
    <property type="entry name" value="Ribosomal protein S3, C-terminal domain"/>
    <property type="match status" value="1"/>
</dbReference>
<dbReference type="HAMAP" id="MF_01309_B">
    <property type="entry name" value="Ribosomal_uS3_B"/>
    <property type="match status" value="1"/>
</dbReference>
<dbReference type="InterPro" id="IPR004087">
    <property type="entry name" value="KH_dom"/>
</dbReference>
<dbReference type="InterPro" id="IPR015946">
    <property type="entry name" value="KH_dom-like_a/b"/>
</dbReference>
<dbReference type="InterPro" id="IPR004044">
    <property type="entry name" value="KH_dom_type_2"/>
</dbReference>
<dbReference type="InterPro" id="IPR009019">
    <property type="entry name" value="KH_sf_prok-type"/>
</dbReference>
<dbReference type="InterPro" id="IPR036419">
    <property type="entry name" value="Ribosomal_S3_C_sf"/>
</dbReference>
<dbReference type="InterPro" id="IPR005704">
    <property type="entry name" value="Ribosomal_uS3_bac-typ"/>
</dbReference>
<dbReference type="InterPro" id="IPR001351">
    <property type="entry name" value="Ribosomal_uS3_C"/>
</dbReference>
<dbReference type="InterPro" id="IPR018280">
    <property type="entry name" value="Ribosomal_uS3_CS"/>
</dbReference>
<dbReference type="NCBIfam" id="TIGR01009">
    <property type="entry name" value="rpsC_bact"/>
    <property type="match status" value="1"/>
</dbReference>
<dbReference type="PANTHER" id="PTHR11760">
    <property type="entry name" value="30S/40S RIBOSOMAL PROTEIN S3"/>
    <property type="match status" value="1"/>
</dbReference>
<dbReference type="PANTHER" id="PTHR11760:SF19">
    <property type="entry name" value="SMALL RIBOSOMAL SUBUNIT PROTEIN US3C"/>
    <property type="match status" value="1"/>
</dbReference>
<dbReference type="Pfam" id="PF07650">
    <property type="entry name" value="KH_2"/>
    <property type="match status" value="1"/>
</dbReference>
<dbReference type="Pfam" id="PF00189">
    <property type="entry name" value="Ribosomal_S3_C"/>
    <property type="match status" value="1"/>
</dbReference>
<dbReference type="SMART" id="SM00322">
    <property type="entry name" value="KH"/>
    <property type="match status" value="1"/>
</dbReference>
<dbReference type="SUPFAM" id="SSF54814">
    <property type="entry name" value="Prokaryotic type KH domain (KH-domain type II)"/>
    <property type="match status" value="1"/>
</dbReference>
<dbReference type="SUPFAM" id="SSF54821">
    <property type="entry name" value="Ribosomal protein S3 C-terminal domain"/>
    <property type="match status" value="1"/>
</dbReference>
<dbReference type="PROSITE" id="PS50823">
    <property type="entry name" value="KH_TYPE_2"/>
    <property type="match status" value="1"/>
</dbReference>
<dbReference type="PROSITE" id="PS00548">
    <property type="entry name" value="RIBOSOMAL_S3"/>
    <property type="match status" value="1"/>
</dbReference>
<protein>
    <recommendedName>
        <fullName evidence="1">Small ribosomal subunit protein uS3</fullName>
    </recommendedName>
    <alternativeName>
        <fullName evidence="2">30S ribosomal protein S3</fullName>
    </alternativeName>
</protein>
<evidence type="ECO:0000255" key="1">
    <source>
        <dbReference type="HAMAP-Rule" id="MF_01309"/>
    </source>
</evidence>
<evidence type="ECO:0000305" key="2"/>
<keyword id="KW-1185">Reference proteome</keyword>
<keyword id="KW-0687">Ribonucleoprotein</keyword>
<keyword id="KW-0689">Ribosomal protein</keyword>
<keyword id="KW-0694">RNA-binding</keyword>
<keyword id="KW-0699">rRNA-binding</keyword>
<reference key="1">
    <citation type="submission" date="2006-10" db="EMBL/GenBank/DDBJ databases">
        <title>Complete sequence of chromosome of Pelobacter propionicus DSM 2379.</title>
        <authorList>
            <consortium name="US DOE Joint Genome Institute"/>
            <person name="Copeland A."/>
            <person name="Lucas S."/>
            <person name="Lapidus A."/>
            <person name="Barry K."/>
            <person name="Detter J.C."/>
            <person name="Glavina del Rio T."/>
            <person name="Hammon N."/>
            <person name="Israni S."/>
            <person name="Dalin E."/>
            <person name="Tice H."/>
            <person name="Pitluck S."/>
            <person name="Saunders E."/>
            <person name="Brettin T."/>
            <person name="Bruce D."/>
            <person name="Han C."/>
            <person name="Tapia R."/>
            <person name="Schmutz J."/>
            <person name="Larimer F."/>
            <person name="Land M."/>
            <person name="Hauser L."/>
            <person name="Kyrpides N."/>
            <person name="Kim E."/>
            <person name="Lovley D."/>
            <person name="Richardson P."/>
        </authorList>
    </citation>
    <scope>NUCLEOTIDE SEQUENCE [LARGE SCALE GENOMIC DNA]</scope>
    <source>
        <strain>DSM 2379 / NBRC 103807 / OttBd1</strain>
    </source>
</reference>
<name>RS3_PELPD</name>
<proteinExistence type="inferred from homology"/>